<protein>
    <recommendedName>
        <fullName evidence="1">UDP-3-O-acylglucosamine N-acyltransferase</fullName>
        <ecNumber evidence="1">2.3.1.191</ecNumber>
    </recommendedName>
</protein>
<proteinExistence type="inferred from homology"/>
<comment type="function">
    <text evidence="1">Catalyzes the N-acylation of UDP-3-O-acylglucosamine using 3-hydroxyacyl-ACP as the acyl donor. Is involved in the biosynthesis of lipid A, a phosphorylated glycolipid that anchors the lipopolysaccharide to the outer membrane of the cell.</text>
</comment>
<comment type="catalytic activity">
    <reaction evidence="1">
        <text>a UDP-3-O-[(3R)-3-hydroxyacyl]-alpha-D-glucosamine + a (3R)-hydroxyacyl-[ACP] = a UDP-2-N,3-O-bis[(3R)-3-hydroxyacyl]-alpha-D-glucosamine + holo-[ACP] + H(+)</text>
        <dbReference type="Rhea" id="RHEA:53836"/>
        <dbReference type="Rhea" id="RHEA-COMP:9685"/>
        <dbReference type="Rhea" id="RHEA-COMP:9945"/>
        <dbReference type="ChEBI" id="CHEBI:15378"/>
        <dbReference type="ChEBI" id="CHEBI:64479"/>
        <dbReference type="ChEBI" id="CHEBI:78827"/>
        <dbReference type="ChEBI" id="CHEBI:137740"/>
        <dbReference type="ChEBI" id="CHEBI:137748"/>
        <dbReference type="EC" id="2.3.1.191"/>
    </reaction>
</comment>
<comment type="pathway">
    <text evidence="1">Bacterial outer membrane biogenesis; LPS lipid A biosynthesis.</text>
</comment>
<comment type="subunit">
    <text evidence="1">Homotrimer.</text>
</comment>
<comment type="similarity">
    <text evidence="1">Belongs to the transferase hexapeptide repeat family. LpxD subfamily.</text>
</comment>
<gene>
    <name evidence="1" type="primary">lpxD</name>
    <name type="ordered locus">CPS_1563</name>
</gene>
<organism>
    <name type="scientific">Colwellia psychrerythraea (strain 34H / ATCC BAA-681)</name>
    <name type="common">Vibrio psychroerythus</name>
    <dbReference type="NCBI Taxonomy" id="167879"/>
    <lineage>
        <taxon>Bacteria</taxon>
        <taxon>Pseudomonadati</taxon>
        <taxon>Pseudomonadota</taxon>
        <taxon>Gammaproteobacteria</taxon>
        <taxon>Alteromonadales</taxon>
        <taxon>Colwelliaceae</taxon>
        <taxon>Colwellia</taxon>
    </lineage>
</organism>
<evidence type="ECO:0000255" key="1">
    <source>
        <dbReference type="HAMAP-Rule" id="MF_00523"/>
    </source>
</evidence>
<keyword id="KW-0012">Acyltransferase</keyword>
<keyword id="KW-0441">Lipid A biosynthesis</keyword>
<keyword id="KW-0444">Lipid biosynthesis</keyword>
<keyword id="KW-0443">Lipid metabolism</keyword>
<keyword id="KW-0677">Repeat</keyword>
<keyword id="KW-0808">Transferase</keyword>
<reference key="1">
    <citation type="journal article" date="2005" name="Proc. Natl. Acad. Sci. U.S.A.">
        <title>The psychrophilic lifestyle as revealed by the genome sequence of Colwellia psychrerythraea 34H through genomic and proteomic analyses.</title>
        <authorList>
            <person name="Methe B.A."/>
            <person name="Nelson K.E."/>
            <person name="Deming J.W."/>
            <person name="Momen B."/>
            <person name="Melamud E."/>
            <person name="Zhang X."/>
            <person name="Moult J."/>
            <person name="Madupu R."/>
            <person name="Nelson W.C."/>
            <person name="Dodson R.J."/>
            <person name="Brinkac L.M."/>
            <person name="Daugherty S.C."/>
            <person name="Durkin A.S."/>
            <person name="DeBoy R.T."/>
            <person name="Kolonay J.F."/>
            <person name="Sullivan S.A."/>
            <person name="Zhou L."/>
            <person name="Davidsen T.M."/>
            <person name="Wu M."/>
            <person name="Huston A.L."/>
            <person name="Lewis M."/>
            <person name="Weaver B."/>
            <person name="Weidman J.F."/>
            <person name="Khouri H."/>
            <person name="Utterback T.R."/>
            <person name="Feldblyum T.V."/>
            <person name="Fraser C.M."/>
        </authorList>
    </citation>
    <scope>NUCLEOTIDE SEQUENCE [LARGE SCALE GENOMIC DNA]</scope>
    <source>
        <strain>34H / ATCC BAA-681</strain>
    </source>
</reference>
<dbReference type="EC" id="2.3.1.191" evidence="1"/>
<dbReference type="EMBL" id="CP000083">
    <property type="protein sequence ID" value="AAZ24921.1"/>
    <property type="molecule type" value="Genomic_DNA"/>
</dbReference>
<dbReference type="SMR" id="Q485G0"/>
<dbReference type="STRING" id="167879.CPS_1563"/>
<dbReference type="KEGG" id="cps:CPS_1563"/>
<dbReference type="HOGENOM" id="CLU_049865_0_1_6"/>
<dbReference type="UniPathway" id="UPA00973"/>
<dbReference type="Proteomes" id="UP000000547">
    <property type="component" value="Chromosome"/>
</dbReference>
<dbReference type="GO" id="GO:0016020">
    <property type="term" value="C:membrane"/>
    <property type="evidence" value="ECO:0007669"/>
    <property type="project" value="GOC"/>
</dbReference>
<dbReference type="GO" id="GO:0016410">
    <property type="term" value="F:N-acyltransferase activity"/>
    <property type="evidence" value="ECO:0007669"/>
    <property type="project" value="InterPro"/>
</dbReference>
<dbReference type="GO" id="GO:0009245">
    <property type="term" value="P:lipid A biosynthetic process"/>
    <property type="evidence" value="ECO:0007669"/>
    <property type="project" value="UniProtKB-UniRule"/>
</dbReference>
<dbReference type="CDD" id="cd03352">
    <property type="entry name" value="LbH_LpxD"/>
    <property type="match status" value="1"/>
</dbReference>
<dbReference type="Gene3D" id="1.20.5.170">
    <property type="match status" value="1"/>
</dbReference>
<dbReference type="Gene3D" id="2.160.10.10">
    <property type="entry name" value="Hexapeptide repeat proteins"/>
    <property type="match status" value="1"/>
</dbReference>
<dbReference type="Gene3D" id="3.40.1390.10">
    <property type="entry name" value="MurE/MurF, N-terminal domain"/>
    <property type="match status" value="1"/>
</dbReference>
<dbReference type="HAMAP" id="MF_00523">
    <property type="entry name" value="LpxD"/>
    <property type="match status" value="1"/>
</dbReference>
<dbReference type="InterPro" id="IPR001451">
    <property type="entry name" value="Hexapep"/>
</dbReference>
<dbReference type="InterPro" id="IPR018357">
    <property type="entry name" value="Hexapep_transf_CS"/>
</dbReference>
<dbReference type="InterPro" id="IPR007691">
    <property type="entry name" value="LpxD"/>
</dbReference>
<dbReference type="InterPro" id="IPR011004">
    <property type="entry name" value="Trimer_LpxA-like_sf"/>
</dbReference>
<dbReference type="InterPro" id="IPR020573">
    <property type="entry name" value="UDP_GlcNAc_AcTrfase_non-rep"/>
</dbReference>
<dbReference type="NCBIfam" id="TIGR01853">
    <property type="entry name" value="lipid_A_lpxD"/>
    <property type="match status" value="1"/>
</dbReference>
<dbReference type="NCBIfam" id="NF002060">
    <property type="entry name" value="PRK00892.1"/>
    <property type="match status" value="1"/>
</dbReference>
<dbReference type="PANTHER" id="PTHR43378">
    <property type="entry name" value="UDP-3-O-ACYLGLUCOSAMINE N-ACYLTRANSFERASE"/>
    <property type="match status" value="1"/>
</dbReference>
<dbReference type="PANTHER" id="PTHR43378:SF2">
    <property type="entry name" value="UDP-3-O-ACYLGLUCOSAMINE N-ACYLTRANSFERASE 1, MITOCHONDRIAL-RELATED"/>
    <property type="match status" value="1"/>
</dbReference>
<dbReference type="Pfam" id="PF00132">
    <property type="entry name" value="Hexapep"/>
    <property type="match status" value="2"/>
</dbReference>
<dbReference type="Pfam" id="PF14602">
    <property type="entry name" value="Hexapep_2"/>
    <property type="match status" value="1"/>
</dbReference>
<dbReference type="Pfam" id="PF04613">
    <property type="entry name" value="LpxD"/>
    <property type="match status" value="1"/>
</dbReference>
<dbReference type="SUPFAM" id="SSF51161">
    <property type="entry name" value="Trimeric LpxA-like enzymes"/>
    <property type="match status" value="1"/>
</dbReference>
<dbReference type="PROSITE" id="PS00101">
    <property type="entry name" value="HEXAPEP_TRANSFERASES"/>
    <property type="match status" value="2"/>
</dbReference>
<name>LPXD_COLP3</name>
<feature type="chain" id="PRO_0000264361" description="UDP-3-O-acylglucosamine N-acyltransferase">
    <location>
        <begin position="1"/>
        <end position="349"/>
    </location>
</feature>
<feature type="active site" description="Proton acceptor" evidence="1">
    <location>
        <position position="248"/>
    </location>
</feature>
<sequence length="349" mass="36606">MTYTLAEIAIKLDAKLIVPAALDEQNEALTQISGLATLAKAGTGQVAFLANSKYQQQLSSTNASAVIVSPDAVEACQVSALVMDNPYMGYAMLASLLDSTPKVSCGIHPNAVIADDVLIGENVSVGANTVIESGVQLADNVSIGAGCFIGHGAKIGESTILWANITIYHRVEIGHHCLIQASTVIGSDGFGYAPVKGQYKWHKIPQLGSVIIGDHVEIGASTTIDRGALDNTEIRDGVILDNQIQIAHNVIVGENTAIAGCTVIAGSTVIGKNCTIAGLVGVNGHITIADNCVFTGMSMVTKNISQAGVYSSGMPVVQNKEWNKTNARVKRLDSLTKRVKELEKLLAKN</sequence>
<accession>Q485G0</accession>